<feature type="chain" id="PRO_1000119282" description="Small ribosomal subunit protein bS18">
    <location>
        <begin position="1"/>
        <end position="75"/>
    </location>
</feature>
<evidence type="ECO:0000255" key="1">
    <source>
        <dbReference type="HAMAP-Rule" id="MF_00270"/>
    </source>
</evidence>
<evidence type="ECO:0000305" key="2"/>
<keyword id="KW-0687">Ribonucleoprotein</keyword>
<keyword id="KW-0689">Ribosomal protein</keyword>
<keyword id="KW-0694">RNA-binding</keyword>
<keyword id="KW-0699">rRNA-binding</keyword>
<reference key="1">
    <citation type="journal article" date="2009" name="PLoS Genet.">
        <title>Organised genome dynamics in the Escherichia coli species results in highly diverse adaptive paths.</title>
        <authorList>
            <person name="Touchon M."/>
            <person name="Hoede C."/>
            <person name="Tenaillon O."/>
            <person name="Barbe V."/>
            <person name="Baeriswyl S."/>
            <person name="Bidet P."/>
            <person name="Bingen E."/>
            <person name="Bonacorsi S."/>
            <person name="Bouchier C."/>
            <person name="Bouvet O."/>
            <person name="Calteau A."/>
            <person name="Chiapello H."/>
            <person name="Clermont O."/>
            <person name="Cruveiller S."/>
            <person name="Danchin A."/>
            <person name="Diard M."/>
            <person name="Dossat C."/>
            <person name="Karoui M.E."/>
            <person name="Frapy E."/>
            <person name="Garry L."/>
            <person name="Ghigo J.M."/>
            <person name="Gilles A.M."/>
            <person name="Johnson J."/>
            <person name="Le Bouguenec C."/>
            <person name="Lescat M."/>
            <person name="Mangenot S."/>
            <person name="Martinez-Jehanne V."/>
            <person name="Matic I."/>
            <person name="Nassif X."/>
            <person name="Oztas S."/>
            <person name="Petit M.A."/>
            <person name="Pichon C."/>
            <person name="Rouy Z."/>
            <person name="Ruf C.S."/>
            <person name="Schneider D."/>
            <person name="Tourret J."/>
            <person name="Vacherie B."/>
            <person name="Vallenet D."/>
            <person name="Medigue C."/>
            <person name="Rocha E.P.C."/>
            <person name="Denamur E."/>
        </authorList>
    </citation>
    <scope>NUCLEOTIDE SEQUENCE [LARGE SCALE GENOMIC DNA]</scope>
    <source>
        <strain>ATCC 35469 / DSM 13698 / BCRC 15582 / CCUG 18766 / IAM 14443 / JCM 21226 / LMG 7866 / NBRC 102419 / NCTC 12128 / CDC 0568-73</strain>
    </source>
</reference>
<organism>
    <name type="scientific">Escherichia fergusonii (strain ATCC 35469 / DSM 13698 / CCUG 18766 / IAM 14443 / JCM 21226 / LMG 7866 / NBRC 102419 / NCTC 12128 / CDC 0568-73)</name>
    <dbReference type="NCBI Taxonomy" id="585054"/>
    <lineage>
        <taxon>Bacteria</taxon>
        <taxon>Pseudomonadati</taxon>
        <taxon>Pseudomonadota</taxon>
        <taxon>Gammaproteobacteria</taxon>
        <taxon>Enterobacterales</taxon>
        <taxon>Enterobacteriaceae</taxon>
        <taxon>Escherichia</taxon>
    </lineage>
</organism>
<dbReference type="EMBL" id="CU928158">
    <property type="protein sequence ID" value="CAQ91674.1"/>
    <property type="molecule type" value="Genomic_DNA"/>
</dbReference>
<dbReference type="RefSeq" id="WP_000135199.1">
    <property type="nucleotide sequence ID" value="NC_011740.1"/>
</dbReference>
<dbReference type="SMR" id="B7LLY4"/>
<dbReference type="GeneID" id="98186237"/>
<dbReference type="KEGG" id="efe:EFER_4255"/>
<dbReference type="HOGENOM" id="CLU_148710_2_3_6"/>
<dbReference type="OrthoDB" id="9812008at2"/>
<dbReference type="Proteomes" id="UP000000745">
    <property type="component" value="Chromosome"/>
</dbReference>
<dbReference type="GO" id="GO:0022627">
    <property type="term" value="C:cytosolic small ribosomal subunit"/>
    <property type="evidence" value="ECO:0007669"/>
    <property type="project" value="TreeGrafter"/>
</dbReference>
<dbReference type="GO" id="GO:0070181">
    <property type="term" value="F:small ribosomal subunit rRNA binding"/>
    <property type="evidence" value="ECO:0007669"/>
    <property type="project" value="TreeGrafter"/>
</dbReference>
<dbReference type="GO" id="GO:0003735">
    <property type="term" value="F:structural constituent of ribosome"/>
    <property type="evidence" value="ECO:0007669"/>
    <property type="project" value="InterPro"/>
</dbReference>
<dbReference type="GO" id="GO:0006412">
    <property type="term" value="P:translation"/>
    <property type="evidence" value="ECO:0007669"/>
    <property type="project" value="UniProtKB-UniRule"/>
</dbReference>
<dbReference type="FunFam" id="4.10.640.10:FF:000001">
    <property type="entry name" value="30S ribosomal protein S18"/>
    <property type="match status" value="1"/>
</dbReference>
<dbReference type="Gene3D" id="4.10.640.10">
    <property type="entry name" value="Ribosomal protein S18"/>
    <property type="match status" value="1"/>
</dbReference>
<dbReference type="HAMAP" id="MF_00270">
    <property type="entry name" value="Ribosomal_bS18"/>
    <property type="match status" value="1"/>
</dbReference>
<dbReference type="InterPro" id="IPR001648">
    <property type="entry name" value="Ribosomal_bS18"/>
</dbReference>
<dbReference type="InterPro" id="IPR018275">
    <property type="entry name" value="Ribosomal_bS18_CS"/>
</dbReference>
<dbReference type="InterPro" id="IPR036870">
    <property type="entry name" value="Ribosomal_bS18_sf"/>
</dbReference>
<dbReference type="NCBIfam" id="TIGR00165">
    <property type="entry name" value="S18"/>
    <property type="match status" value="1"/>
</dbReference>
<dbReference type="PANTHER" id="PTHR13479">
    <property type="entry name" value="30S RIBOSOMAL PROTEIN S18"/>
    <property type="match status" value="1"/>
</dbReference>
<dbReference type="PANTHER" id="PTHR13479:SF40">
    <property type="entry name" value="SMALL RIBOSOMAL SUBUNIT PROTEIN BS18M"/>
    <property type="match status" value="1"/>
</dbReference>
<dbReference type="Pfam" id="PF01084">
    <property type="entry name" value="Ribosomal_S18"/>
    <property type="match status" value="1"/>
</dbReference>
<dbReference type="PRINTS" id="PR00974">
    <property type="entry name" value="RIBOSOMALS18"/>
</dbReference>
<dbReference type="SUPFAM" id="SSF46911">
    <property type="entry name" value="Ribosomal protein S18"/>
    <property type="match status" value="1"/>
</dbReference>
<dbReference type="PROSITE" id="PS00057">
    <property type="entry name" value="RIBOSOMAL_S18"/>
    <property type="match status" value="1"/>
</dbReference>
<gene>
    <name evidence="1" type="primary">rpsR</name>
    <name type="ordered locus">EFER_4255</name>
</gene>
<accession>B7LLY4</accession>
<protein>
    <recommendedName>
        <fullName evidence="1">Small ribosomal subunit protein bS18</fullName>
    </recommendedName>
    <alternativeName>
        <fullName evidence="2">30S ribosomal protein S18</fullName>
    </alternativeName>
</protein>
<comment type="function">
    <text evidence="1">Binds as a heterodimer with protein bS6 to the central domain of the 16S rRNA, where it helps stabilize the platform of the 30S subunit.</text>
</comment>
<comment type="subunit">
    <text evidence="1">Part of the 30S ribosomal subunit. Forms a tight heterodimer with protein bS6.</text>
</comment>
<comment type="similarity">
    <text evidence="1">Belongs to the bacterial ribosomal protein bS18 family.</text>
</comment>
<name>RS18_ESCF3</name>
<sequence length="75" mass="8986">MARYFRRRKFCRFTAEGVQEIDYKDIATLKNYITESGKIVPSRITGTRAKYQRQLARAIKRARYLSLLPYTDRHQ</sequence>
<proteinExistence type="inferred from homology"/>